<protein>
    <recommendedName>
        <fullName evidence="1">Fe/S biogenesis protein NfuA</fullName>
    </recommendedName>
</protein>
<proteinExistence type="inferred from homology"/>
<keyword id="KW-0004">4Fe-4S</keyword>
<keyword id="KW-0408">Iron</keyword>
<keyword id="KW-0411">Iron-sulfur</keyword>
<keyword id="KW-0479">Metal-binding</keyword>
<accession>A9KUY3</accession>
<name>NFUA_SHEB9</name>
<evidence type="ECO:0000255" key="1">
    <source>
        <dbReference type="HAMAP-Rule" id="MF_01637"/>
    </source>
</evidence>
<sequence>MITISDAAQAHFVKLLADQPEGTHIRVFVISPGTSQAECGVSYCPPDAVESDDIEIEFTGFNAMVDEKSAPFLEDATIDFVTDQLGSQLTLKAPNAKMRKVSGDAPLVERIEYVIQSEINPQLAGHGGNIMLVEITKEGVAVLQFGGGCNGCSQVDITLKDGIEKQLLDMFPGELTGVRDVTDHQHGEHSYA</sequence>
<gene>
    <name evidence="1" type="primary">nfuA</name>
    <name type="ordered locus">Sbal195_4324</name>
</gene>
<reference key="1">
    <citation type="submission" date="2007-11" db="EMBL/GenBank/DDBJ databases">
        <title>Complete sequence of chromosome of Shewanella baltica OS195.</title>
        <authorList>
            <consortium name="US DOE Joint Genome Institute"/>
            <person name="Copeland A."/>
            <person name="Lucas S."/>
            <person name="Lapidus A."/>
            <person name="Barry K."/>
            <person name="Glavina del Rio T."/>
            <person name="Dalin E."/>
            <person name="Tice H."/>
            <person name="Pitluck S."/>
            <person name="Chain P."/>
            <person name="Malfatti S."/>
            <person name="Shin M."/>
            <person name="Vergez L."/>
            <person name="Schmutz J."/>
            <person name="Larimer F."/>
            <person name="Land M."/>
            <person name="Hauser L."/>
            <person name="Kyrpides N."/>
            <person name="Kim E."/>
            <person name="Brettar I."/>
            <person name="Rodrigues J."/>
            <person name="Konstantinidis K."/>
            <person name="Klappenbach J."/>
            <person name="Hofle M."/>
            <person name="Tiedje J."/>
            <person name="Richardson P."/>
        </authorList>
    </citation>
    <scope>NUCLEOTIDE SEQUENCE [LARGE SCALE GENOMIC DNA]</scope>
    <source>
        <strain>OS195</strain>
    </source>
</reference>
<comment type="function">
    <text evidence="1">Involved in iron-sulfur cluster biogenesis. Binds a 4Fe-4S cluster, can transfer this cluster to apoproteins, and thereby intervenes in the maturation of Fe/S proteins. Could also act as a scaffold/chaperone for damaged Fe/S proteins.</text>
</comment>
<comment type="cofactor">
    <cofactor evidence="1">
        <name>[4Fe-4S] cluster</name>
        <dbReference type="ChEBI" id="CHEBI:49883"/>
    </cofactor>
    <text evidence="1">Binds 1 [4Fe-4S] cluster per subunit. The cluster is presumably bound at the interface of two monomers.</text>
</comment>
<comment type="subunit">
    <text evidence="1">Homodimer.</text>
</comment>
<comment type="similarity">
    <text evidence="1">Belongs to the NfuA family.</text>
</comment>
<dbReference type="EMBL" id="CP000891">
    <property type="protein sequence ID" value="ABX51482.1"/>
    <property type="molecule type" value="Genomic_DNA"/>
</dbReference>
<dbReference type="RefSeq" id="WP_006079591.1">
    <property type="nucleotide sequence ID" value="NC_009997.1"/>
</dbReference>
<dbReference type="SMR" id="A9KUY3"/>
<dbReference type="GeneID" id="11775045"/>
<dbReference type="KEGG" id="sbn:Sbal195_4324"/>
<dbReference type="HOGENOM" id="CLU_094569_0_0_6"/>
<dbReference type="Proteomes" id="UP000000770">
    <property type="component" value="Chromosome"/>
</dbReference>
<dbReference type="GO" id="GO:0051539">
    <property type="term" value="F:4 iron, 4 sulfur cluster binding"/>
    <property type="evidence" value="ECO:0007669"/>
    <property type="project" value="UniProtKB-UniRule"/>
</dbReference>
<dbReference type="GO" id="GO:0005506">
    <property type="term" value="F:iron ion binding"/>
    <property type="evidence" value="ECO:0007669"/>
    <property type="project" value="InterPro"/>
</dbReference>
<dbReference type="GO" id="GO:0016226">
    <property type="term" value="P:iron-sulfur cluster assembly"/>
    <property type="evidence" value="ECO:0007669"/>
    <property type="project" value="UniProtKB-UniRule"/>
</dbReference>
<dbReference type="GO" id="GO:0051604">
    <property type="term" value="P:protein maturation"/>
    <property type="evidence" value="ECO:0007669"/>
    <property type="project" value="UniProtKB-UniRule"/>
</dbReference>
<dbReference type="Gene3D" id="3.30.300.130">
    <property type="entry name" value="Fe-S cluster assembly (FSCA)"/>
    <property type="match status" value="1"/>
</dbReference>
<dbReference type="Gene3D" id="2.60.300.12">
    <property type="entry name" value="HesB-like domain"/>
    <property type="match status" value="1"/>
</dbReference>
<dbReference type="HAMAP" id="MF_01637">
    <property type="entry name" value="Fe_S_biogen_NfuA"/>
    <property type="match status" value="1"/>
</dbReference>
<dbReference type="InterPro" id="IPR017726">
    <property type="entry name" value="Fe/S_biogenesis_protein_NfuA"/>
</dbReference>
<dbReference type="InterPro" id="IPR000361">
    <property type="entry name" value="FeS_biogenesis"/>
</dbReference>
<dbReference type="InterPro" id="IPR034904">
    <property type="entry name" value="FSCA_dom_sf"/>
</dbReference>
<dbReference type="InterPro" id="IPR035903">
    <property type="entry name" value="HesB-like_dom_sf"/>
</dbReference>
<dbReference type="InterPro" id="IPR001075">
    <property type="entry name" value="NIF_FeS_clus_asmbl_NifU_C"/>
</dbReference>
<dbReference type="NCBIfam" id="NF008392">
    <property type="entry name" value="PRK11190.1"/>
    <property type="match status" value="1"/>
</dbReference>
<dbReference type="NCBIfam" id="TIGR03341">
    <property type="entry name" value="YhgI_GntY"/>
    <property type="match status" value="1"/>
</dbReference>
<dbReference type="PANTHER" id="PTHR11178:SF51">
    <property type="entry name" value="FE_S BIOGENESIS PROTEIN NFUA"/>
    <property type="match status" value="1"/>
</dbReference>
<dbReference type="PANTHER" id="PTHR11178">
    <property type="entry name" value="IRON-SULFUR CLUSTER SCAFFOLD PROTEIN NFU-RELATED"/>
    <property type="match status" value="1"/>
</dbReference>
<dbReference type="Pfam" id="PF01521">
    <property type="entry name" value="Fe-S_biosyn"/>
    <property type="match status" value="1"/>
</dbReference>
<dbReference type="Pfam" id="PF01106">
    <property type="entry name" value="NifU"/>
    <property type="match status" value="1"/>
</dbReference>
<dbReference type="SUPFAM" id="SSF117916">
    <property type="entry name" value="Fe-S cluster assembly (FSCA) domain-like"/>
    <property type="match status" value="1"/>
</dbReference>
<dbReference type="SUPFAM" id="SSF89360">
    <property type="entry name" value="HesB-like domain"/>
    <property type="match status" value="1"/>
</dbReference>
<feature type="chain" id="PRO_1000088199" description="Fe/S biogenesis protein NfuA">
    <location>
        <begin position="1"/>
        <end position="192"/>
    </location>
</feature>
<feature type="binding site" evidence="1">
    <location>
        <position position="149"/>
    </location>
    <ligand>
        <name>[4Fe-4S] cluster</name>
        <dbReference type="ChEBI" id="CHEBI:49883"/>
    </ligand>
</feature>
<feature type="binding site" evidence="1">
    <location>
        <position position="152"/>
    </location>
    <ligand>
        <name>[4Fe-4S] cluster</name>
        <dbReference type="ChEBI" id="CHEBI:49883"/>
    </ligand>
</feature>
<organism>
    <name type="scientific">Shewanella baltica (strain OS195)</name>
    <dbReference type="NCBI Taxonomy" id="399599"/>
    <lineage>
        <taxon>Bacteria</taxon>
        <taxon>Pseudomonadati</taxon>
        <taxon>Pseudomonadota</taxon>
        <taxon>Gammaproteobacteria</taxon>
        <taxon>Alteromonadales</taxon>
        <taxon>Shewanellaceae</taxon>
        <taxon>Shewanella</taxon>
    </lineage>
</organism>